<name>OMP19_BRUME</name>
<reference key="1">
    <citation type="journal article" date="2002" name="Proc. Natl. Acad. Sci. U.S.A.">
        <title>The genome sequence of the facultative intracellular pathogen Brucella melitensis.</title>
        <authorList>
            <person name="DelVecchio V.G."/>
            <person name="Kapatral V."/>
            <person name="Redkar R.J."/>
            <person name="Patra G."/>
            <person name="Mujer C."/>
            <person name="Los T."/>
            <person name="Ivanova N."/>
            <person name="Anderson I."/>
            <person name="Bhattacharyya A."/>
            <person name="Lykidis A."/>
            <person name="Reznik G."/>
            <person name="Jablonski L."/>
            <person name="Larsen N."/>
            <person name="D'Souza M."/>
            <person name="Bernal A."/>
            <person name="Mazur M."/>
            <person name="Goltsman E."/>
            <person name="Selkov E."/>
            <person name="Elzer P.H."/>
            <person name="Hagius S."/>
            <person name="O'Callaghan D."/>
            <person name="Letesson J.-J."/>
            <person name="Haselkorn R."/>
            <person name="Kyrpides N.C."/>
            <person name="Overbeek R."/>
        </authorList>
    </citation>
    <scope>NUCLEOTIDE SEQUENCE [LARGE SCALE GENOMIC DNA]</scope>
    <source>
        <strain>ATCC 23456 / CCUG 17765 / NCTC 10094 / 16M</strain>
    </source>
</reference>
<keyword id="KW-0998">Cell outer membrane</keyword>
<keyword id="KW-0449">Lipoprotein</keyword>
<keyword id="KW-0472">Membrane</keyword>
<keyword id="KW-0564">Palmitate</keyword>
<keyword id="KW-0732">Signal</keyword>
<proteinExistence type="inferred from homology"/>
<dbReference type="EMBL" id="AE008917">
    <property type="protein sequence ID" value="AAL51317.1"/>
    <property type="molecule type" value="Genomic_DNA"/>
</dbReference>
<dbReference type="PIR" id="AB3269">
    <property type="entry name" value="AB3269"/>
</dbReference>
<dbReference type="RefSeq" id="WP_002964998.1">
    <property type="nucleotide sequence ID" value="NZ_GG703778.1"/>
</dbReference>
<dbReference type="SMR" id="P0A3P1"/>
<dbReference type="KEGG" id="bme:BMEI0135"/>
<dbReference type="KEGG" id="bmel:DK63_1300"/>
<dbReference type="PATRIC" id="fig|224914.52.peg.1371"/>
<dbReference type="eggNOG" id="ENOG503363Z">
    <property type="taxonomic scope" value="Bacteria"/>
</dbReference>
<dbReference type="Proteomes" id="UP000000419">
    <property type="component" value="Chromosome I"/>
</dbReference>
<dbReference type="GO" id="GO:0009279">
    <property type="term" value="C:cell outer membrane"/>
    <property type="evidence" value="ECO:0007669"/>
    <property type="project" value="UniProtKB-SubCell"/>
</dbReference>
<dbReference type="GO" id="GO:0004866">
    <property type="term" value="F:endopeptidase inhibitor activity"/>
    <property type="evidence" value="ECO:0007669"/>
    <property type="project" value="InterPro"/>
</dbReference>
<dbReference type="Gene3D" id="2.40.128.10">
    <property type="match status" value="1"/>
</dbReference>
<dbReference type="InterPro" id="IPR021140">
    <property type="entry name" value="Inh/Omp19"/>
</dbReference>
<dbReference type="InterPro" id="IPR010571">
    <property type="entry name" value="OM_lipoprot_Omp19_bac"/>
</dbReference>
<dbReference type="InterPro" id="IPR016085">
    <property type="entry name" value="Protease_inh_b-brl_dom"/>
</dbReference>
<dbReference type="Pfam" id="PF02974">
    <property type="entry name" value="Inh"/>
    <property type="match status" value="1"/>
</dbReference>
<dbReference type="PIRSF" id="PIRSF034005">
    <property type="entry name" value="OM_lipoprot_Omp19_bac"/>
    <property type="match status" value="1"/>
</dbReference>
<dbReference type="SUPFAM" id="SSF50882">
    <property type="entry name" value="beta-Barrel protease inhibitors"/>
    <property type="match status" value="1"/>
</dbReference>
<dbReference type="PROSITE" id="PS51257">
    <property type="entry name" value="PROKAR_LIPOPROTEIN"/>
    <property type="match status" value="1"/>
</dbReference>
<gene>
    <name type="primary">omp19</name>
    <name type="ordered locus">BMEI0135</name>
</gene>
<protein>
    <recommendedName>
        <fullName>Outer membrane lipoprotein omp19</fullName>
    </recommendedName>
    <alternativeName>
        <fullName>18 kDa immunoreactive antigen</fullName>
    </alternativeName>
    <alternativeName>
        <fullName>19 kDa OMP</fullName>
    </alternativeName>
    <alternativeName>
        <fullName>Minor outer membrane protein omp19</fullName>
    </alternativeName>
</protein>
<feature type="signal peptide" evidence="2">
    <location>
        <begin position="1"/>
        <end position="20"/>
    </location>
</feature>
<feature type="chain" id="PRO_0000018244" description="Outer membrane lipoprotein omp19">
    <location>
        <begin position="21"/>
        <end position="177"/>
    </location>
</feature>
<feature type="region of interest" description="Disordered" evidence="1">
    <location>
        <begin position="28"/>
        <end position="79"/>
    </location>
</feature>
<feature type="compositionally biased region" description="Polar residues" evidence="1">
    <location>
        <begin position="50"/>
        <end position="77"/>
    </location>
</feature>
<feature type="lipid moiety-binding region" description="N-palmitoyl cysteine" evidence="2">
    <location>
        <position position="21"/>
    </location>
</feature>
<feature type="lipid moiety-binding region" description="S-diacylglycerol cysteine" evidence="2">
    <location>
        <position position="21"/>
    </location>
</feature>
<sequence>MGISKASLLSLAAAGIVLAGCQSSRLGNLDNVSPPPPPAPVNAVPAGTVQKGNLDSPTQFPNAPSTDMSAQSGTQVASLPPASAPDLTPGAVAGVWNASLGGQSCKIATPQTKYGQGYRAGPLRCPGELANLASWAVNGKQLVLYDANGGTVASLYSSGQGRFDGQTTGGQAVTLSR</sequence>
<accession>P0A3P1</accession>
<accession>Q44663</accession>
<accession>Q44699</accession>
<comment type="subcellular location">
    <subcellularLocation>
        <location>Cell outer membrane</location>
        <topology>Lipid-anchor</topology>
    </subcellularLocation>
</comment>
<comment type="miscellaneous">
    <text>Elicits an immune response in humans, mice, sheep and goats infected with B.melitensis or B.abortus, but not in B.abortus-infected cattle.</text>
</comment>
<comment type="similarity">
    <text evidence="2">Belongs to the rhizobiaceae omp19 lipoprotein family.</text>
</comment>
<organism>
    <name type="scientific">Brucella melitensis biotype 1 (strain ATCC 23456 / CCUG 17765 / NCTC 10094 / 16M)</name>
    <dbReference type="NCBI Taxonomy" id="224914"/>
    <lineage>
        <taxon>Bacteria</taxon>
        <taxon>Pseudomonadati</taxon>
        <taxon>Pseudomonadota</taxon>
        <taxon>Alphaproteobacteria</taxon>
        <taxon>Hyphomicrobiales</taxon>
        <taxon>Brucellaceae</taxon>
        <taxon>Brucella/Ochrobactrum group</taxon>
        <taxon>Brucella</taxon>
    </lineage>
</organism>
<evidence type="ECO:0000256" key="1">
    <source>
        <dbReference type="SAM" id="MobiDB-lite"/>
    </source>
</evidence>
<evidence type="ECO:0000305" key="2"/>